<protein>
    <recommendedName>
        <fullName evidence="3">Parbolysin P5</fullName>
    </recommendedName>
    <alternativeName>
        <fullName>Parbolysin 5</fullName>
    </alternativeName>
</protein>
<dbReference type="EMBL" id="KT693318">
    <property type="protein sequence ID" value="ALI86909.1"/>
    <property type="molecule type" value="mRNA"/>
</dbReference>
<dbReference type="GO" id="GO:0005576">
    <property type="term" value="C:extracellular region"/>
    <property type="evidence" value="ECO:0007669"/>
    <property type="project" value="UniProtKB-SubCell"/>
</dbReference>
<dbReference type="GO" id="GO:0090729">
    <property type="term" value="F:toxin activity"/>
    <property type="evidence" value="ECO:0007669"/>
    <property type="project" value="UniProtKB-KW"/>
</dbReference>
<dbReference type="GO" id="GO:0031640">
    <property type="term" value="P:killing of cells of another organism"/>
    <property type="evidence" value="ECO:0007669"/>
    <property type="project" value="UniProtKB-KW"/>
</dbReference>
<accession>A0A0P0CC97</accession>
<proteinExistence type="inferred from homology"/>
<name>CXP5_PARCG</name>
<feature type="chain" id="PRO_0000454513" description="Parbolysin P5" evidence="5">
    <location>
        <begin position="1"/>
        <end position="93"/>
    </location>
</feature>
<feature type="disulfide bond" evidence="2">
    <location>
        <begin position="16"/>
        <end position="37"/>
    </location>
</feature>
<feature type="disulfide bond" evidence="2">
    <location>
        <begin position="22"/>
        <end position="33"/>
    </location>
</feature>
<feature type="disulfide bond" evidence="2">
    <location>
        <begin position="47"/>
        <end position="60"/>
    </location>
</feature>
<evidence type="ECO:0000250" key="1">
    <source>
        <dbReference type="UniProtKB" id="A0A0N7HUN6"/>
    </source>
</evidence>
<evidence type="ECO:0000250" key="2">
    <source>
        <dbReference type="UniProtKB" id="P01527"/>
    </source>
</evidence>
<evidence type="ECO:0000303" key="3">
    <source>
    </source>
</evidence>
<evidence type="ECO:0000305" key="4"/>
<evidence type="ECO:0000305" key="5">
    <source>
    </source>
</evidence>
<evidence type="ECO:0000312" key="6">
    <source>
        <dbReference type="EMBL" id="ALI86909.1"/>
    </source>
</evidence>
<keyword id="KW-0204">Cytolysis</keyword>
<keyword id="KW-1015">Disulfide bond</keyword>
<keyword id="KW-0354">Hemolysis</keyword>
<keyword id="KW-0964">Secreted</keyword>
<keyword id="KW-0800">Toxin</keyword>
<organism>
    <name type="scientific">Parborlasia corrugatus</name>
    <name type="common">Antarctic nemertean worm</name>
    <dbReference type="NCBI Taxonomy" id="187802"/>
    <lineage>
        <taxon>Eukaryota</taxon>
        <taxon>Metazoa</taxon>
        <taxon>Spiralia</taxon>
        <taxon>Lophotrochozoa</taxon>
        <taxon>Nemertea</taxon>
        <taxon>Pilidiophora</taxon>
        <taxon>Heteronemertea</taxon>
        <taxon>Lineidae</taxon>
        <taxon>Parborlasia</taxon>
    </lineage>
</organism>
<comment type="function">
    <text evidence="1">Cytolysin that shows hemolytic activity (on bovine erythrocytes, HC(50)=5.75 mg/ml). This hemolytic activity is completely inhibited by small unilamelar vesicles composed of PC/PG, PC/PI and PC/PS in 1:1 molar ratios (with at least 100 mg/ml concentration).</text>
</comment>
<comment type="subcellular location">
    <subcellularLocation>
        <location evidence="5">Secreted</location>
    </subcellularLocation>
</comment>
<comment type="tissue specificity">
    <text evidence="5">Localized within the skin and proboscis and are most readily isolated from body mucus secretions.</text>
</comment>
<comment type="similarity">
    <text evidence="4">Belongs to the worm cytolysin family.</text>
</comment>
<sequence>GWPAYPGSNGIRSSVCQKKLGCGSKNLASLGVCKAFCLGRKRFWQKCGKNGSSGKGSRICNPVLAHAVEKAGKGLIKVTDMAVAAIVKYAGKK</sequence>
<reference evidence="6" key="1">
    <citation type="journal article" date="2015" name="Toxicon">
        <title>Recombinant expression and predicted structure of parborlysin, a cytolytic protein from the Antarctic heteronemertine Parborlasia corrugatus.</title>
        <authorList>
            <person name="Butala M."/>
            <person name="Sega D."/>
            <person name="Tomc B."/>
            <person name="Podlesek Z."/>
            <person name="Kem W.R."/>
            <person name="Kupper F.C."/>
            <person name="Turk T."/>
        </authorList>
    </citation>
    <scope>NUCLEOTIDE SEQUENCE [MRNA]</scope>
</reference>